<reference key="1">
    <citation type="journal article" date="1987" name="Nucleic Acids Res.">
        <title>Nucleotide sequence and primary structures of gene products coded for by the T4 genome between map positions 48.266 kb and 39.166 kb.</title>
        <authorList>
            <person name="Tomaschewski J."/>
            <person name="Rueger W."/>
        </authorList>
    </citation>
    <scope>NUCLEOTIDE SEQUENCE [GENOMIC DNA]</scope>
    <source>
        <strain>C</strain>
    </source>
</reference>
<reference key="2">
    <citation type="journal article" date="2003" name="Microbiol. Mol. Biol. Rev.">
        <title>Bacteriophage T4 genome.</title>
        <authorList>
            <person name="Miller E.S."/>
            <person name="Kutter E."/>
            <person name="Mosig G."/>
            <person name="Arisaka F."/>
            <person name="Kunisawa T."/>
            <person name="Ruger W."/>
        </authorList>
    </citation>
    <scope>NUCLEOTIDE SEQUENCE [LARGE SCALE GENOMIC DNA]</scope>
</reference>
<organism>
    <name type="scientific">Enterobacteria phage T4</name>
    <name type="common">Bacteriophage T4</name>
    <dbReference type="NCBI Taxonomy" id="10665"/>
    <lineage>
        <taxon>Viruses</taxon>
        <taxon>Duplodnaviria</taxon>
        <taxon>Heunggongvirae</taxon>
        <taxon>Uroviricota</taxon>
        <taxon>Caudoviricetes</taxon>
        <taxon>Straboviridae</taxon>
        <taxon>Tevenvirinae</taxon>
        <taxon>Tequatrovirus</taxon>
    </lineage>
</organism>
<keyword id="KW-1185">Reference proteome</keyword>
<proteinExistence type="predicted"/>
<name>Y04G_BPT4</name>
<feature type="chain" id="PRO_0000165110" description="Uncharacterized 11.8 kDa protein in Gp55-nrdG intergenic region">
    <location>
        <begin position="1"/>
        <end position="102"/>
    </location>
</feature>
<gene>
    <name type="primary">y04G</name>
    <name type="synonym">55.7</name>
    <name type="synonym">nrdH</name>
</gene>
<sequence length="102" mass="11752">MKQNKIEVYGIPDEVGRCPGCQSVTKLLKELNAPFTFYKVLTNNGKIEYDRPLIVSLAKRAGFTSLNIRYPVIFINDSRQKNIKHFKETLISLGYDRDIIED</sequence>
<protein>
    <recommendedName>
        <fullName>Uncharacterized 11.8 kDa protein in Gp55-nrdG intergenic region</fullName>
    </recommendedName>
</protein>
<dbReference type="EMBL" id="Y00122">
    <property type="protein sequence ID" value="CAA68314.1"/>
    <property type="molecule type" value="Genomic_DNA"/>
</dbReference>
<dbReference type="EMBL" id="AF158101">
    <property type="protein sequence ID" value="AAD42635.1"/>
    <property type="molecule type" value="Genomic_DNA"/>
</dbReference>
<dbReference type="PIR" id="I29284">
    <property type="entry name" value="ZABPT9"/>
</dbReference>
<dbReference type="RefSeq" id="NP_049686.1">
    <property type="nucleotide sequence ID" value="NC_000866.4"/>
</dbReference>
<dbReference type="SMR" id="P07077"/>
<dbReference type="GeneID" id="1258609"/>
<dbReference type="KEGG" id="vg:1258609"/>
<dbReference type="OrthoDB" id="18964at10239"/>
<dbReference type="Proteomes" id="UP000009087">
    <property type="component" value="Segment"/>
</dbReference>
<dbReference type="Gene3D" id="3.40.30.10">
    <property type="entry name" value="Glutaredoxin"/>
    <property type="match status" value="1"/>
</dbReference>
<dbReference type="InterPro" id="IPR036249">
    <property type="entry name" value="Thioredoxin-like_sf"/>
</dbReference>
<dbReference type="SUPFAM" id="SSF52833">
    <property type="entry name" value="Thioredoxin-like"/>
    <property type="match status" value="1"/>
</dbReference>
<organismHost>
    <name type="scientific">Escherichia coli</name>
    <dbReference type="NCBI Taxonomy" id="562"/>
</organismHost>
<accession>P07077</accession>